<proteinExistence type="inferred from homology"/>
<protein>
    <recommendedName>
        <fullName>DegV domain-containing protein DR_1903</fullName>
    </recommendedName>
</protein>
<gene>
    <name type="ordered locus">DR_1903</name>
</gene>
<reference key="1">
    <citation type="journal article" date="1999" name="Science">
        <title>Genome sequence of the radioresistant bacterium Deinococcus radiodurans R1.</title>
        <authorList>
            <person name="White O."/>
            <person name="Eisen J.A."/>
            <person name="Heidelberg J.F."/>
            <person name="Hickey E.K."/>
            <person name="Peterson J.D."/>
            <person name="Dodson R.J."/>
            <person name="Haft D.H."/>
            <person name="Gwinn M.L."/>
            <person name="Nelson W.C."/>
            <person name="Richardson D.L."/>
            <person name="Moffat K.S."/>
            <person name="Qin H."/>
            <person name="Jiang L."/>
            <person name="Pamphile W."/>
            <person name="Crosby M."/>
            <person name="Shen M."/>
            <person name="Vamathevan J.J."/>
            <person name="Lam P."/>
            <person name="McDonald L.A."/>
            <person name="Utterback T.R."/>
            <person name="Zalewski C."/>
            <person name="Makarova K.S."/>
            <person name="Aravind L."/>
            <person name="Daly M.J."/>
            <person name="Minton K.W."/>
            <person name="Fleischmann R.D."/>
            <person name="Ketchum K.A."/>
            <person name="Nelson K.E."/>
            <person name="Salzberg S.L."/>
            <person name="Smith H.O."/>
            <person name="Venter J.C."/>
            <person name="Fraser C.M."/>
        </authorList>
    </citation>
    <scope>NUCLEOTIDE SEQUENCE [LARGE SCALE GENOMIC DNA]</scope>
    <source>
        <strain>ATCC 13939 / DSM 20539 / JCM 16871 / CCUG 27074 / LMG 4051 / NBRC 15346 / NCIMB 9279 / VKM B-1422 / R1</strain>
    </source>
</reference>
<dbReference type="EMBL" id="AE000513">
    <property type="protein sequence ID" value="AAF11454.1"/>
    <property type="molecule type" value="Genomic_DNA"/>
</dbReference>
<dbReference type="PIR" id="H75339">
    <property type="entry name" value="H75339"/>
</dbReference>
<dbReference type="RefSeq" id="NP_295626.1">
    <property type="nucleotide sequence ID" value="NC_001263.1"/>
</dbReference>
<dbReference type="RefSeq" id="WP_010888538.1">
    <property type="nucleotide sequence ID" value="NC_001263.1"/>
</dbReference>
<dbReference type="SMR" id="Q9RT62"/>
<dbReference type="STRING" id="243230.DR_1903"/>
<dbReference type="PaxDb" id="243230-DR_1903"/>
<dbReference type="EnsemblBacteria" id="AAF11454">
    <property type="protein sequence ID" value="AAF11454"/>
    <property type="gene ID" value="DR_1903"/>
</dbReference>
<dbReference type="GeneID" id="69518143"/>
<dbReference type="KEGG" id="dra:DR_1903"/>
<dbReference type="PATRIC" id="fig|243230.17.peg.2118"/>
<dbReference type="eggNOG" id="COG1307">
    <property type="taxonomic scope" value="Bacteria"/>
</dbReference>
<dbReference type="HOGENOM" id="CLU_048251_0_1_0"/>
<dbReference type="InParanoid" id="Q9RT62"/>
<dbReference type="OrthoDB" id="9775494at2"/>
<dbReference type="Proteomes" id="UP000002524">
    <property type="component" value="Chromosome 1"/>
</dbReference>
<dbReference type="GO" id="GO:0008289">
    <property type="term" value="F:lipid binding"/>
    <property type="evidence" value="ECO:0007669"/>
    <property type="project" value="UniProtKB-KW"/>
</dbReference>
<dbReference type="Gene3D" id="3.30.1180.10">
    <property type="match status" value="1"/>
</dbReference>
<dbReference type="Gene3D" id="3.40.50.10170">
    <property type="match status" value="1"/>
</dbReference>
<dbReference type="InterPro" id="IPR003797">
    <property type="entry name" value="DegV"/>
</dbReference>
<dbReference type="InterPro" id="IPR043168">
    <property type="entry name" value="DegV_C"/>
</dbReference>
<dbReference type="InterPro" id="IPR050270">
    <property type="entry name" value="DegV_domain_contain"/>
</dbReference>
<dbReference type="NCBIfam" id="TIGR00762">
    <property type="entry name" value="DegV"/>
    <property type="match status" value="1"/>
</dbReference>
<dbReference type="PANTHER" id="PTHR33434">
    <property type="entry name" value="DEGV DOMAIN-CONTAINING PROTEIN DR_1986-RELATED"/>
    <property type="match status" value="1"/>
</dbReference>
<dbReference type="PANTHER" id="PTHR33434:SF2">
    <property type="entry name" value="FATTY ACID-BINDING PROTEIN TM_1468"/>
    <property type="match status" value="1"/>
</dbReference>
<dbReference type="Pfam" id="PF02645">
    <property type="entry name" value="DegV"/>
    <property type="match status" value="1"/>
</dbReference>
<dbReference type="SUPFAM" id="SSF82549">
    <property type="entry name" value="DAK1/DegV-like"/>
    <property type="match status" value="1"/>
</dbReference>
<dbReference type="PROSITE" id="PS51482">
    <property type="entry name" value="DEGV"/>
    <property type="match status" value="1"/>
</dbReference>
<evidence type="ECO:0000250" key="1"/>
<evidence type="ECO:0000250" key="2">
    <source>
        <dbReference type="UniProtKB" id="Q9X1H9"/>
    </source>
</evidence>
<evidence type="ECO:0000255" key="3">
    <source>
        <dbReference type="PROSITE-ProRule" id="PRU00815"/>
    </source>
</evidence>
<feature type="chain" id="PRO_0000209763" description="DegV domain-containing protein DR_1903">
    <location>
        <begin position="1"/>
        <end position="288"/>
    </location>
</feature>
<feature type="domain" description="DegV" evidence="3">
    <location>
        <begin position="2"/>
        <end position="280"/>
    </location>
</feature>
<feature type="binding site" evidence="2">
    <location>
        <position position="59"/>
    </location>
    <ligand>
        <name>hexadecanoate</name>
        <dbReference type="ChEBI" id="CHEBI:7896"/>
    </ligand>
</feature>
<feature type="binding site" evidence="2">
    <location>
        <position position="93"/>
    </location>
    <ligand>
        <name>hexadecanoate</name>
        <dbReference type="ChEBI" id="CHEBI:7896"/>
    </ligand>
</feature>
<accession>Q9RT62</accession>
<comment type="function">
    <text evidence="1">May bind long-chain fatty acids, such as palmitate, and may play a role in lipid transport or fatty acid metabolism.</text>
</comment>
<organism>
    <name type="scientific">Deinococcus radiodurans (strain ATCC 13939 / DSM 20539 / JCM 16871 / CCUG 27074 / LMG 4051 / NBRC 15346 / NCIMB 9279 / VKM B-1422 / R1)</name>
    <dbReference type="NCBI Taxonomy" id="243230"/>
    <lineage>
        <taxon>Bacteria</taxon>
        <taxon>Thermotogati</taxon>
        <taxon>Deinococcota</taxon>
        <taxon>Deinococci</taxon>
        <taxon>Deinococcales</taxon>
        <taxon>Deinococcaceae</taxon>
        <taxon>Deinococcus</taxon>
    </lineage>
</organism>
<keyword id="KW-0446">Lipid-binding</keyword>
<keyword id="KW-1185">Reference proteome</keyword>
<name>Y1903_DEIRA</name>
<sequence length="288" mass="30472">MIAVTTESTADILPLQLGYSGIHLLPVPLGHQGQVYSERELPPDQLVNLIRTTGEPARTLAIDDEVVARTFEAALQGSKSGRLVHVASGSRFTPHFEVAARVAGQFGVRVQVIDGGTVSYALGVQALHAAHLADQGADFGQIARALAELRERTLLTFAVESLDFLRVNGRIGNVAAFIGNWLGLRPLLAVEAGEVVSKARVRGQAAAVRTLLSATHQFQHQTGETLRLYCGHTIGGEGAAEQLQGQLQAVYRDLPAPLHPLGSGLTANVGPGVVAVLAFPRRFGLGHA</sequence>